<protein>
    <recommendedName>
        <fullName>Putative 8-amino-7-oxononanoate synthase</fullName>
        <shortName>AONS</shortName>
        <ecNumber>2.3.1.47</ecNumber>
    </recommendedName>
    <alternativeName>
        <fullName>7-keto-8-amino-pelargonic acid synthase</fullName>
        <shortName>7-KAP synthase</shortName>
    </alternativeName>
    <alternativeName>
        <fullName>8-amino-7-ketopelargonate synthase</fullName>
    </alternativeName>
</protein>
<feature type="chain" id="PRO_0000381058" description="Putative 8-amino-7-oxononanoate synthase">
    <location>
        <begin position="1"/>
        <end position="394"/>
    </location>
</feature>
<feature type="binding site" evidence="1">
    <location>
        <position position="30"/>
    </location>
    <ligand>
        <name>substrate</name>
    </ligand>
</feature>
<feature type="binding site" evidence="1">
    <location>
        <begin position="117"/>
        <end position="118"/>
    </location>
    <ligand>
        <name>pyridoxal 5'-phosphate</name>
        <dbReference type="ChEBI" id="CHEBI:597326"/>
    </ligand>
</feature>
<feature type="binding site" evidence="1">
    <location>
        <position position="142"/>
    </location>
    <ligand>
        <name>substrate</name>
    </ligand>
</feature>
<feature type="binding site" evidence="1">
    <location>
        <position position="190"/>
    </location>
    <ligand>
        <name>pyridoxal 5'-phosphate</name>
        <dbReference type="ChEBI" id="CHEBI:597326"/>
    </ligand>
</feature>
<feature type="binding site" evidence="1">
    <location>
        <begin position="215"/>
        <end position="218"/>
    </location>
    <ligand>
        <name>pyridoxal 5'-phosphate</name>
        <dbReference type="ChEBI" id="CHEBI:597326"/>
    </ligand>
</feature>
<feature type="binding site" evidence="1">
    <location>
        <begin position="246"/>
        <end position="249"/>
    </location>
    <ligand>
        <name>pyridoxal 5'-phosphate</name>
        <dbReference type="ChEBI" id="CHEBI:597326"/>
    </ligand>
</feature>
<feature type="binding site" evidence="1">
    <location>
        <position position="364"/>
    </location>
    <ligand>
        <name>substrate</name>
    </ligand>
</feature>
<feature type="modified residue" description="N6-(pyridoxal phosphate)lysine" evidence="1">
    <location>
        <position position="249"/>
    </location>
</feature>
<gene>
    <name type="primary">bioF</name>
    <name type="ordered locus">Npun_R3567</name>
</gene>
<proteinExistence type="inferred from homology"/>
<comment type="function">
    <text evidence="1">Catalyzes the decarboxylative condensation of pimeloyl-[acyl-carrier protein] and L-alanine to produce 8-amino-7-oxononanoate (AON), [acyl-carrier protein], and carbon dioxide.</text>
</comment>
<comment type="catalytic activity">
    <reaction>
        <text>6-carboxyhexanoyl-[ACP] + L-alanine + H(+) = (8S)-8-amino-7-oxononanoate + holo-[ACP] + CO2</text>
        <dbReference type="Rhea" id="RHEA:42288"/>
        <dbReference type="Rhea" id="RHEA-COMP:9685"/>
        <dbReference type="Rhea" id="RHEA-COMP:9955"/>
        <dbReference type="ChEBI" id="CHEBI:15378"/>
        <dbReference type="ChEBI" id="CHEBI:16526"/>
        <dbReference type="ChEBI" id="CHEBI:57972"/>
        <dbReference type="ChEBI" id="CHEBI:64479"/>
        <dbReference type="ChEBI" id="CHEBI:78846"/>
        <dbReference type="ChEBI" id="CHEBI:149468"/>
        <dbReference type="EC" id="2.3.1.47"/>
    </reaction>
</comment>
<comment type="cofactor">
    <cofactor evidence="1">
        <name>pyridoxal 5'-phosphate</name>
        <dbReference type="ChEBI" id="CHEBI:597326"/>
    </cofactor>
</comment>
<comment type="pathway">
    <text>Cofactor biosynthesis; biotin biosynthesis.</text>
</comment>
<comment type="subunit">
    <text evidence="1">Homodimer.</text>
</comment>
<comment type="similarity">
    <text evidence="2">Belongs to the class-II pyridoxal-phosphate-dependent aminotransferase family. BioF subfamily.</text>
</comment>
<name>BIOF_NOSP7</name>
<keyword id="KW-0093">Biotin biosynthesis</keyword>
<keyword id="KW-0663">Pyridoxal phosphate</keyword>
<keyword id="KW-1185">Reference proteome</keyword>
<keyword id="KW-0808">Transferase</keyword>
<accession>B2J1W1</accession>
<organism>
    <name type="scientific">Nostoc punctiforme (strain ATCC 29133 / PCC 73102)</name>
    <dbReference type="NCBI Taxonomy" id="63737"/>
    <lineage>
        <taxon>Bacteria</taxon>
        <taxon>Bacillati</taxon>
        <taxon>Cyanobacteriota</taxon>
        <taxon>Cyanophyceae</taxon>
        <taxon>Nostocales</taxon>
        <taxon>Nostocaceae</taxon>
        <taxon>Nostoc</taxon>
    </lineage>
</organism>
<reference key="1">
    <citation type="journal article" date="2013" name="Plant Physiol.">
        <title>A Nostoc punctiforme Sugar Transporter Necessary to Establish a Cyanobacterium-Plant Symbiosis.</title>
        <authorList>
            <person name="Ekman M."/>
            <person name="Picossi S."/>
            <person name="Campbell E.L."/>
            <person name="Meeks J.C."/>
            <person name="Flores E."/>
        </authorList>
    </citation>
    <scope>NUCLEOTIDE SEQUENCE [LARGE SCALE GENOMIC DNA]</scope>
    <source>
        <strain>ATCC 29133 / PCC 73102</strain>
    </source>
</reference>
<sequence>MNFEFGAKRRDPYAWLEQSLATIHRADWYRSVQPINGRPGATVVLAGQEVINFASNDYLGLAGDKRLMAAATAAIAEFGTGSTGSRLLSGHRELHRELEKAIASTKQTEDALVFSSGYLANLGAITALVGKRDLILSDQYNHSSLKNGAILSGAAVVEYPHCDVAVLKTQLSQQRQNYRRCLILTDTVFSMDGDLCPLPALFDLADEFSCMLLVDEAHATGVLGKTGAGCVEYFGCTGKQLIQIGTLSKALGSLGGYVAGSSALIDFLRNRAPSWIYTTGLSPADTAAALAAIKIVQQEPQHLAQLWRNIHYLKTLLQQLPNLKLLPSESPILCFQLPNATDALKAGKQLRDAGIFAPAIRPPTVPTSRIRISVMATHKVAHIEKLVAALKDVI</sequence>
<evidence type="ECO:0000250" key="1"/>
<evidence type="ECO:0000305" key="2"/>
<dbReference type="EC" id="2.3.1.47"/>
<dbReference type="EMBL" id="CP001037">
    <property type="protein sequence ID" value="ACC81963.1"/>
    <property type="molecule type" value="Genomic_DNA"/>
</dbReference>
<dbReference type="RefSeq" id="WP_012409935.1">
    <property type="nucleotide sequence ID" value="NC_010628.1"/>
</dbReference>
<dbReference type="SMR" id="B2J1W1"/>
<dbReference type="STRING" id="63737.Npun_R3567"/>
<dbReference type="EnsemblBacteria" id="ACC81963">
    <property type="protein sequence ID" value="ACC81963"/>
    <property type="gene ID" value="Npun_R3567"/>
</dbReference>
<dbReference type="KEGG" id="npu:Npun_R3567"/>
<dbReference type="eggNOG" id="COG0156">
    <property type="taxonomic scope" value="Bacteria"/>
</dbReference>
<dbReference type="HOGENOM" id="CLU_015846_11_0_3"/>
<dbReference type="OrthoDB" id="9807157at2"/>
<dbReference type="PhylomeDB" id="B2J1W1"/>
<dbReference type="UniPathway" id="UPA00078"/>
<dbReference type="Proteomes" id="UP000001191">
    <property type="component" value="Chromosome"/>
</dbReference>
<dbReference type="GO" id="GO:0008710">
    <property type="term" value="F:8-amino-7-oxononanoate synthase activity"/>
    <property type="evidence" value="ECO:0007669"/>
    <property type="project" value="UniProtKB-EC"/>
</dbReference>
<dbReference type="GO" id="GO:0030170">
    <property type="term" value="F:pyridoxal phosphate binding"/>
    <property type="evidence" value="ECO:0007669"/>
    <property type="project" value="InterPro"/>
</dbReference>
<dbReference type="GO" id="GO:0009102">
    <property type="term" value="P:biotin biosynthetic process"/>
    <property type="evidence" value="ECO:0007669"/>
    <property type="project" value="UniProtKB-UniPathway"/>
</dbReference>
<dbReference type="CDD" id="cd06454">
    <property type="entry name" value="KBL_like"/>
    <property type="match status" value="1"/>
</dbReference>
<dbReference type="Gene3D" id="3.90.1150.10">
    <property type="entry name" value="Aspartate Aminotransferase, domain 1"/>
    <property type="match status" value="1"/>
</dbReference>
<dbReference type="Gene3D" id="3.40.640.10">
    <property type="entry name" value="Type I PLP-dependent aspartate aminotransferase-like (Major domain)"/>
    <property type="match status" value="1"/>
</dbReference>
<dbReference type="InterPro" id="IPR001917">
    <property type="entry name" value="Aminotrans_II_pyridoxalP_BS"/>
</dbReference>
<dbReference type="InterPro" id="IPR004839">
    <property type="entry name" value="Aminotransferase_I/II_large"/>
</dbReference>
<dbReference type="InterPro" id="IPR050087">
    <property type="entry name" value="AON_synthase_class-II"/>
</dbReference>
<dbReference type="InterPro" id="IPR004723">
    <property type="entry name" value="AONS_Archaea/Proteobacteria"/>
</dbReference>
<dbReference type="InterPro" id="IPR015424">
    <property type="entry name" value="PyrdxlP-dep_Trfase"/>
</dbReference>
<dbReference type="InterPro" id="IPR015421">
    <property type="entry name" value="PyrdxlP-dep_Trfase_major"/>
</dbReference>
<dbReference type="InterPro" id="IPR015422">
    <property type="entry name" value="PyrdxlP-dep_Trfase_small"/>
</dbReference>
<dbReference type="NCBIfam" id="TIGR00858">
    <property type="entry name" value="bioF"/>
    <property type="match status" value="1"/>
</dbReference>
<dbReference type="PANTHER" id="PTHR13693:SF100">
    <property type="entry name" value="8-AMINO-7-OXONONANOATE SYNTHASE"/>
    <property type="match status" value="1"/>
</dbReference>
<dbReference type="PANTHER" id="PTHR13693">
    <property type="entry name" value="CLASS II AMINOTRANSFERASE/8-AMINO-7-OXONONANOATE SYNTHASE"/>
    <property type="match status" value="1"/>
</dbReference>
<dbReference type="Pfam" id="PF00155">
    <property type="entry name" value="Aminotran_1_2"/>
    <property type="match status" value="1"/>
</dbReference>
<dbReference type="SUPFAM" id="SSF53383">
    <property type="entry name" value="PLP-dependent transferases"/>
    <property type="match status" value="1"/>
</dbReference>
<dbReference type="PROSITE" id="PS00599">
    <property type="entry name" value="AA_TRANSFER_CLASS_2"/>
    <property type="match status" value="1"/>
</dbReference>